<evidence type="ECO:0000250" key="1">
    <source>
        <dbReference type="UniProtKB" id="C7EXK4"/>
    </source>
</evidence>
<evidence type="ECO:0000250" key="2">
    <source>
        <dbReference type="UniProtKB" id="G0S196"/>
    </source>
</evidence>
<evidence type="ECO:0000250" key="3">
    <source>
        <dbReference type="UniProtKB" id="P04191"/>
    </source>
</evidence>
<evidence type="ECO:0000250" key="4">
    <source>
        <dbReference type="UniProtKB" id="P39524"/>
    </source>
</evidence>
<evidence type="ECO:0000250" key="5">
    <source>
        <dbReference type="UniProtKB" id="Q12675"/>
    </source>
</evidence>
<evidence type="ECO:0000250" key="6">
    <source>
        <dbReference type="UniProtKB" id="Q8NB49"/>
    </source>
</evidence>
<evidence type="ECO:0000250" key="7">
    <source>
        <dbReference type="UniProtKB" id="Q9Y2Q0"/>
    </source>
</evidence>
<evidence type="ECO:0000255" key="8"/>
<evidence type="ECO:0000256" key="9">
    <source>
        <dbReference type="SAM" id="MobiDB-lite"/>
    </source>
</evidence>
<evidence type="ECO:0000269" key="10">
    <source>
    </source>
</evidence>
<evidence type="ECO:0000269" key="11">
    <source>
    </source>
</evidence>
<evidence type="ECO:0000269" key="12">
    <source>
    </source>
</evidence>
<evidence type="ECO:0000269" key="13">
    <source>
    </source>
</evidence>
<evidence type="ECO:0000269" key="14">
    <source>
    </source>
</evidence>
<evidence type="ECO:0000269" key="15">
    <source>
    </source>
</evidence>
<evidence type="ECO:0000269" key="16">
    <source>
    </source>
</evidence>
<evidence type="ECO:0000269" key="17">
    <source>
    </source>
</evidence>
<evidence type="ECO:0000269" key="18">
    <source>
    </source>
</evidence>
<evidence type="ECO:0000269" key="19">
    <source>
    </source>
</evidence>
<evidence type="ECO:0000269" key="20">
    <source>
    </source>
</evidence>
<evidence type="ECO:0000269" key="21">
    <source>
    </source>
</evidence>
<evidence type="ECO:0000303" key="22">
    <source>
    </source>
</evidence>
<evidence type="ECO:0000305" key="23"/>
<evidence type="ECO:0000305" key="24">
    <source>
    </source>
</evidence>
<evidence type="ECO:0000305" key="25">
    <source>
    </source>
</evidence>
<evidence type="ECO:0000305" key="26">
    <source>
    </source>
</evidence>
<evidence type="ECO:0000305" key="27">
    <source>
    </source>
</evidence>
<evidence type="ECO:0000305" key="28">
    <source>
    </source>
</evidence>
<evidence type="ECO:0000305" key="29">
    <source>
    </source>
</evidence>
<evidence type="ECO:0000305" key="30">
    <source>
    </source>
</evidence>
<evidence type="ECO:0000305" key="31">
    <source>
    </source>
</evidence>
<evidence type="ECO:0007744" key="32">
    <source>
        <dbReference type="PDB" id="7DRX"/>
    </source>
</evidence>
<evidence type="ECO:0007744" key="33">
    <source>
        <dbReference type="PDB" id="7DSH"/>
    </source>
</evidence>
<evidence type="ECO:0007744" key="34">
    <source>
        <dbReference type="PDB" id="7DSI"/>
    </source>
</evidence>
<evidence type="ECO:0007744" key="35">
    <source>
        <dbReference type="PDB" id="7F7F"/>
    </source>
</evidence>
<evidence type="ECO:0007744" key="36">
    <source>
        <dbReference type="PDB" id="7KY6"/>
    </source>
</evidence>
<evidence type="ECO:0007744" key="37">
    <source>
        <dbReference type="PDB" id="7KYB"/>
    </source>
</evidence>
<evidence type="ECO:0007744" key="38">
    <source>
        <dbReference type="PDB" id="7KYC"/>
    </source>
</evidence>
<evidence type="ECO:0007744" key="39">
    <source>
        <dbReference type="PDB" id="7WHV"/>
    </source>
</evidence>
<evidence type="ECO:0007744" key="40">
    <source>
        <dbReference type="PDB" id="7WHW"/>
    </source>
</evidence>
<evidence type="ECO:0007744" key="41">
    <source>
    </source>
</evidence>
<evidence type="ECO:0007744" key="42">
    <source>
    </source>
</evidence>
<evidence type="ECO:0007744" key="43">
    <source>
    </source>
</evidence>
<evidence type="ECO:0007744" key="44">
    <source>
    </source>
</evidence>
<evidence type="ECO:0007829" key="45">
    <source>
        <dbReference type="PDB" id="7DRX"/>
    </source>
</evidence>
<evidence type="ECO:0007829" key="46">
    <source>
        <dbReference type="PDB" id="7DSI"/>
    </source>
</evidence>
<evidence type="ECO:0007829" key="47">
    <source>
        <dbReference type="PDB" id="7KY6"/>
    </source>
</evidence>
<evidence type="ECO:0007829" key="48">
    <source>
        <dbReference type="PDB" id="7KYC"/>
    </source>
</evidence>
<evidence type="ECO:0007829" key="49">
    <source>
        <dbReference type="PDB" id="7WHV"/>
    </source>
</evidence>
<evidence type="ECO:0007829" key="50">
    <source>
        <dbReference type="PDB" id="7WHW"/>
    </source>
</evidence>
<accession>P32660</accession>
<accession>D3DM74</accession>
<keyword id="KW-0002">3D-structure</keyword>
<keyword id="KW-0067">ATP-binding</keyword>
<keyword id="KW-1003">Cell membrane</keyword>
<keyword id="KW-0967">Endosome</keyword>
<keyword id="KW-0333">Golgi apparatus</keyword>
<keyword id="KW-1017">Isopeptide bond</keyword>
<keyword id="KW-0445">Lipid transport</keyword>
<keyword id="KW-0460">Magnesium</keyword>
<keyword id="KW-0472">Membrane</keyword>
<keyword id="KW-0479">Metal-binding</keyword>
<keyword id="KW-0547">Nucleotide-binding</keyword>
<keyword id="KW-0597">Phosphoprotein</keyword>
<keyword id="KW-1185">Reference proteome</keyword>
<keyword id="KW-1278">Translocase</keyword>
<keyword id="KW-0812">Transmembrane</keyword>
<keyword id="KW-1133">Transmembrane helix</keyword>
<keyword id="KW-0813">Transport</keyword>
<keyword id="KW-0832">Ubl conjugation</keyword>
<organism>
    <name type="scientific">Saccharomyces cerevisiae (strain ATCC 204508 / S288c)</name>
    <name type="common">Baker's yeast</name>
    <dbReference type="NCBI Taxonomy" id="559292"/>
    <lineage>
        <taxon>Eukaryota</taxon>
        <taxon>Fungi</taxon>
        <taxon>Dikarya</taxon>
        <taxon>Ascomycota</taxon>
        <taxon>Saccharomycotina</taxon>
        <taxon>Saccharomycetes</taxon>
        <taxon>Saccharomycetales</taxon>
        <taxon>Saccharomycetaceae</taxon>
        <taxon>Saccharomyces</taxon>
    </lineage>
</organism>
<proteinExistence type="evidence at protein level"/>
<gene>
    <name evidence="22" type="primary">DNF1</name>
    <name type="ordered locus">YER166W</name>
    <name type="ORF">SYGP-ORF7</name>
</gene>
<comment type="function">
    <text evidence="10 13 14 15 18 19 20 21">Catalytic component of a P4-ATPase flippase complex which catalyzes the hydrolysis of ATP coupled to the transport of glucosylceramide, phosphatidylcholine, phosphatidylethanolamine, and small amounts of phosphatidylserine from the lumenal to the cytosolic leaflet of the cell membrane and ensures the maintenance of asymmetric distribution of phospholipids (PubMed:12631737, PubMed:22308393, PubMed:22791719, PubMed:23302692, PubMed:31786280, PubMed:33060204, PubMed:33320091, PubMed:35294892). Does not appear to transport sphingomyelin, inositol phosphoceramide, or phosphatidic acid (PubMed:12631737, PubMed:22308393, PubMed:33320091). Required for efficient endocytosis (PubMed:12631737).</text>
</comment>
<comment type="catalytic activity">
    <reaction evidence="24 25 26 27 28 29 30 31">
        <text>ATP + H2O + phospholipidSide 1 = ADP + phosphate + phospholipidSide 2.</text>
        <dbReference type="EC" id="7.6.2.1"/>
    </reaction>
</comment>
<comment type="catalytic activity">
    <reaction evidence="24 25 26 27 28 30">
        <text>a 1,2-diacyl-sn-glycero-3-phosphoethanolamine(out) + ATP + H2O = a 1,2-diacyl-sn-glycero-3-phosphoethanolamine(in) + ADP + phosphate + H(+)</text>
        <dbReference type="Rhea" id="RHEA:66132"/>
        <dbReference type="ChEBI" id="CHEBI:15377"/>
        <dbReference type="ChEBI" id="CHEBI:15378"/>
        <dbReference type="ChEBI" id="CHEBI:30616"/>
        <dbReference type="ChEBI" id="CHEBI:43474"/>
        <dbReference type="ChEBI" id="CHEBI:64612"/>
        <dbReference type="ChEBI" id="CHEBI:456216"/>
    </reaction>
    <physiologicalReaction direction="left-to-right" evidence="24 25 26 27 28 30">
        <dbReference type="Rhea" id="RHEA:66133"/>
    </physiologicalReaction>
</comment>
<comment type="catalytic activity">
    <reaction evidence="24 25 26 27 28 29 30 31">
        <text>a 1,2-diacyl-sn-glycero-3-phosphocholine(out) + ATP + H2O = a 1,2-diacyl-sn-glycero-3-phosphocholine(in) + ADP + phosphate + H(+)</text>
        <dbReference type="Rhea" id="RHEA:38583"/>
        <dbReference type="ChEBI" id="CHEBI:15377"/>
        <dbReference type="ChEBI" id="CHEBI:15378"/>
        <dbReference type="ChEBI" id="CHEBI:30616"/>
        <dbReference type="ChEBI" id="CHEBI:43474"/>
        <dbReference type="ChEBI" id="CHEBI:57643"/>
        <dbReference type="ChEBI" id="CHEBI:456216"/>
    </reaction>
    <physiologicalReaction direction="left-to-right" evidence="24 25 26 27 28 29 30 31">
        <dbReference type="Rhea" id="RHEA:38584"/>
    </physiologicalReaction>
</comment>
<comment type="catalytic activity">
    <reaction evidence="29 30">
        <text>a beta-D-glucosyl-(1&lt;-&gt;1')-N-acylsphing-4-enine(out) + ATP + H2O = a beta-D-glucosyl-(1&lt;-&gt;1')-N-acylsphing-4-enine(in) + ADP + phosphate + H(+)</text>
        <dbReference type="Rhea" id="RHEA:66036"/>
        <dbReference type="ChEBI" id="CHEBI:15377"/>
        <dbReference type="ChEBI" id="CHEBI:15378"/>
        <dbReference type="ChEBI" id="CHEBI:22801"/>
        <dbReference type="ChEBI" id="CHEBI:30616"/>
        <dbReference type="ChEBI" id="CHEBI:43474"/>
        <dbReference type="ChEBI" id="CHEBI:456216"/>
    </reaction>
    <physiologicalReaction direction="left-to-right" evidence="29 30">
        <dbReference type="Rhea" id="RHEA:66037"/>
    </physiologicalReaction>
</comment>
<comment type="catalytic activity">
    <reaction evidence="24 25 27">
        <text>a 1,2-diacyl-sn-glycero-3-phospho-L-serine(out) + ATP + H2O = a 1,2-diacyl-sn-glycero-3-phospho-L-serine(in) + ADP + phosphate + H(+)</text>
        <dbReference type="Rhea" id="RHEA:38567"/>
        <dbReference type="ChEBI" id="CHEBI:15377"/>
        <dbReference type="ChEBI" id="CHEBI:15378"/>
        <dbReference type="ChEBI" id="CHEBI:30616"/>
        <dbReference type="ChEBI" id="CHEBI:43474"/>
        <dbReference type="ChEBI" id="CHEBI:57262"/>
        <dbReference type="ChEBI" id="CHEBI:456216"/>
    </reaction>
    <physiologicalReaction direction="left-to-right" evidence="24 25 27">
        <dbReference type="Rhea" id="RHEA:38568"/>
    </physiologicalReaction>
</comment>
<comment type="cofactor">
    <cofactor evidence="20 21">
        <name>Mg(2+)</name>
        <dbReference type="ChEBI" id="CHEBI:18420"/>
    </cofactor>
</comment>
<comment type="subunit">
    <text evidence="12 14 20 21">Component of a flippase complex consisting of DNF1 and LEM3 (PubMed:22791719, PubMed:33320091, PubMed:35294892). Interacts with LEM3; the interaction is direct and required for their mutual export from the endoplasmic reticulum (PubMed:19411703, PubMed:22791719, PubMed:33320091, PubMed:35294892).</text>
</comment>
<comment type="interaction">
    <interactant intactId="EBI-3121">
        <id>P32660</id>
    </interactant>
    <interactant intactId="EBI-4632">
        <id>P29465</id>
        <label>CHS3</label>
    </interactant>
    <organismsDiffer>false</organismsDiffer>
    <experiments>3</experiments>
</comment>
<comment type="interaction">
    <interactant intactId="EBI-3121">
        <id>P32660</id>
    </interactant>
    <interactant intactId="EBI-3121">
        <id>P32660</id>
        <label>DNF1</label>
    </interactant>
    <organismsDiffer>false</organismsDiffer>
    <experiments>3</experiments>
</comment>
<comment type="interaction">
    <interactant intactId="EBI-3121">
        <id>P32660</id>
    </interactant>
    <interactant intactId="EBI-3114">
        <id>Q12675</id>
        <label>DNF2</label>
    </interactant>
    <organismsDiffer>false</organismsDiffer>
    <experiments>4</experiments>
</comment>
<comment type="interaction">
    <interactant intactId="EBI-3121">
        <id>P32660</id>
    </interactant>
    <interactant intactId="EBI-9813">
        <id>P53739</id>
        <label>FPK1</label>
    </interactant>
    <organismsDiffer>false</organismsDiffer>
    <experiments>2</experiments>
</comment>
<comment type="interaction">
    <interactant intactId="EBI-3121">
        <id>P32660</id>
    </interactant>
    <interactant intactId="EBI-28396">
        <id>P42838</id>
        <label>LEM3</label>
    </interactant>
    <organismsDiffer>false</organismsDiffer>
    <experiments>9</experiments>
</comment>
<comment type="subcellular location">
    <subcellularLocation>
        <location evidence="10 11 13 16 19 20">Cell membrane</location>
        <topology evidence="11">Multi-pass membrane protein</topology>
    </subcellularLocation>
    <subcellularLocation>
        <location evidence="11">Endosome membrane</location>
        <topology evidence="11">Multi-pass membrane protein</topology>
    </subcellularLocation>
    <subcellularLocation>
        <location evidence="11">Golgi apparatus</location>
        <location evidence="11">trans-Golgi network membrane</location>
        <topology evidence="11">Multi-pass membrane protein</topology>
    </subcellularLocation>
    <subcellularLocation>
        <location evidence="13">Cell septum</location>
    </subcellularLocation>
    <subcellularLocation>
        <location evidence="13">Bud</location>
    </subcellularLocation>
</comment>
<comment type="PTM">
    <text evidence="11">Phosphorylated by FPK1 and KIN82.</text>
</comment>
<comment type="disruption phenotype">
    <text evidence="10 17 19">Decreases phosphatidylcholine and glucosylceramide transport into cell (PubMed:33060204). Simultaneous knockout of DNF2 leads to abnormal endocytosis and abnormal cell surface exposure of phosphatidylethanolamine, phosphatidylcholine and phosphatidylserine (PubMed:12631737). Simultaneous knockout of DNF2 results in cold sensitivity, and sensitivity to cobalt, nickel, zinc, calcium, and magnesium ions, duramycin and cinnamycin (phosphatidylethanolamine-binding cytotoxins) and papuamide A (phosphatidylserine-binding cytotoxin) (PubMed:12631737, PubMed:30824614).</text>
</comment>
<comment type="similarity">
    <text evidence="23">Belongs to the cation transport ATPase (P-type) (TC 3.A.3) family. Type IV subfamily.</text>
</comment>
<sequence length="1571" mass="177798">MSGTFHGDGHAPMSPFEDTFQFEDNSSNEDTHIAPTHFDDGATSNKYSRPQVSFNDETPKNKREDAEEFTFNDDTEYDNHSFQPTPKLNNGSGTFDDVELDNDSGEPHTNYDGMKRFRMGTKRNKKGNPIMGRSKTLKWARKNIPNPFEDFTKDDIDPGAINRAQELRTVYYNMPLPKDMIDEEGNPIMQYPRNKIRTTKYTPLTFLPKNILFQFHNFANVYFLVLIILGAFQIFGVTNPGLSAVPLVVIVIITAIKDAIEDSRRTVLDLEVNNTKTHILEGVENENVSTDNISLWRRFKKANSRLLFKFIQYCKEHLTEEGKKKRMQRKRHELRVQKTVGTSGPRSSLDSIDSYRVSADYGRPSLDYDNLEQGAGEANIVDRSLPPRTDCKFAKNYWKGVKVGDIVRIHNNDEIPADIILLSTSDTDGACYVETKNLDGETNLKVRQSLKCTNTIRTSKDIARTKFWIESEGPHSNLYTYQGNMKWRNLADGEIRNEPITINNVLLRGCTLRNTKWAMGVVMFTGGDTKIMLNSGITPTKKSRISRELNFSVVINFVLLFILCFVSGIANGVYYDKKGRSRFSYEFGTIAGSAATNGFVSFWVAVILYQSLVPISLYISVEIIKTAQAAFIYGDVLLYNAKLDYPCTPKSWNISDDLGQVEYIFSDKTGTLTQNVMEFKKCTINGVSYGRAYTEALAGLRKRQGIDVETEGRREKAEIAKDRDTMIDELRALSGNSQFYPEEVTFVSKEFVRDLKGASGEVQQRCCEHFMLALALCHSVLVEANPDNPKKLDLKAQSPDEAALVATARDVGFSFVGKTKKGLIIEMQGIQKEFEILNILEFNSSRKRMSCIVKIPGLNPGDEPRALLICKGADSIIYSRLSRQSGSNSEAILEKTALHLEQYATEGLRTLCIAQRELSWSEYEKWNEKYDIAAASLANREDELEVVADSIERELILLGGTAIEDRLQDGVPDCIELLAEAGIKLWVLTGDKVETAINIGFSCNLLNNEMELLVIKTTGDDVKEFGSEPSEIVDALLSKYLKEYFNLTGSEEEIFEAKKDHEFPKGNYAIVIDGDALKLALYGEDIRRKFLLLCKNCRAVLCCRVSPSQKAAVVKLVKDSLDVMTLAIGDGSNDVAMIQSADVGIGIAGEEGRQAVMCSDYAIGQFRYLARLVLVHGRWSYKRLAEMIPEFFYKNMIFALALFWYGIYNDFDGSYLYEYTYMMFYNLAFTSLPVIFLGILDQDVNDTISLVVPQLYRVGILRKEWNQRKFLWYMLDGLYQSIICFFFPYLVYHKNMIVTSNGLGLDHRYFVGVYVTTIAVISCNTYVLLHQYRWDWFSGLFIALSCLVVFAWTGIWSSAIASREFFKAAARIYGAPSFWAVFFVAVLFCLLPRFTYDSFQKFFYPTDVEIVREMWQHGHFDHYPPGYDPTDPNRPKVTKAGQHGEKIIEGIALSDNLGGSNYSRDSVVTEEIPMTFMHGEDGSPSGYQKQETWMTSPKETQDLLQSPQFQQAQTFGRGPSTNVRSSLDRTREQMIATNQLDNRYSVERARTSLDLPGVTNAASLIGTQQNN</sequence>
<reference key="1">
    <citation type="journal article" date="1997" name="Nature">
        <title>The nucleotide sequence of Saccharomyces cerevisiae chromosome V.</title>
        <authorList>
            <person name="Dietrich F.S."/>
            <person name="Mulligan J.T."/>
            <person name="Hennessy K.M."/>
            <person name="Yelton M.A."/>
            <person name="Allen E."/>
            <person name="Araujo R."/>
            <person name="Aviles E."/>
            <person name="Berno A."/>
            <person name="Brennan T."/>
            <person name="Carpenter J."/>
            <person name="Chen E."/>
            <person name="Cherry J.M."/>
            <person name="Chung E."/>
            <person name="Duncan M."/>
            <person name="Guzman E."/>
            <person name="Hartzell G."/>
            <person name="Hunicke-Smith S."/>
            <person name="Hyman R.W."/>
            <person name="Kayser A."/>
            <person name="Komp C."/>
            <person name="Lashkari D."/>
            <person name="Lew H."/>
            <person name="Lin D."/>
            <person name="Mosedale D."/>
            <person name="Nakahara K."/>
            <person name="Namath A."/>
            <person name="Norgren R."/>
            <person name="Oefner P."/>
            <person name="Oh C."/>
            <person name="Petel F.X."/>
            <person name="Roberts D."/>
            <person name="Sehl P."/>
            <person name="Schramm S."/>
            <person name="Shogren T."/>
            <person name="Smith V."/>
            <person name="Taylor P."/>
            <person name="Wei Y."/>
            <person name="Botstein D."/>
            <person name="Davis R.W."/>
        </authorList>
    </citation>
    <scope>NUCLEOTIDE SEQUENCE [LARGE SCALE GENOMIC DNA]</scope>
    <source>
        <strain>ATCC 204508 / S288c</strain>
    </source>
</reference>
<reference key="2">
    <citation type="journal article" date="2014" name="G3 (Bethesda)">
        <title>The reference genome sequence of Saccharomyces cerevisiae: Then and now.</title>
        <authorList>
            <person name="Engel S.R."/>
            <person name="Dietrich F.S."/>
            <person name="Fisk D.G."/>
            <person name="Binkley G."/>
            <person name="Balakrishnan R."/>
            <person name="Costanzo M.C."/>
            <person name="Dwight S.S."/>
            <person name="Hitz B.C."/>
            <person name="Karra K."/>
            <person name="Nash R.S."/>
            <person name="Weng S."/>
            <person name="Wong E.D."/>
            <person name="Lloyd P."/>
            <person name="Skrzypek M.S."/>
            <person name="Miyasato S.R."/>
            <person name="Simison M."/>
            <person name="Cherry J.M."/>
        </authorList>
    </citation>
    <scope>GENOME REANNOTATION</scope>
    <source>
        <strain>ATCC 204508 / S288c</strain>
    </source>
</reference>
<reference key="3">
    <citation type="journal article" date="2003" name="Mol. Biol. Cell">
        <title>Drs2p-related P-type ATPases Dnf1p and Dnf2p are required for phospholipid translocation across the yeast plasma membrane and serve a role in endocytosis.</title>
        <authorList>
            <person name="Pomorski T."/>
            <person name="Lombardi R."/>
            <person name="Riezman H."/>
            <person name="Devaux P.F."/>
            <person name="van Meer G."/>
            <person name="Holthuis J.C."/>
        </authorList>
    </citation>
    <scope>FUNCTION</scope>
    <scope>CATALYTIC ACTIVITY</scope>
    <scope>SUBCELLULAR LOCATION</scope>
    <scope>DISRUPTION PHENOTYPE</scope>
</reference>
<reference key="4">
    <citation type="journal article" date="2006" name="Proc. Natl. Acad. Sci. U.S.A.">
        <title>A global topology map of the Saccharomyces cerevisiae membrane proteome.</title>
        <authorList>
            <person name="Kim H."/>
            <person name="Melen K."/>
            <person name="Oesterberg M."/>
            <person name="von Heijne G."/>
        </authorList>
    </citation>
    <scope>TOPOLOGY [LARGE SCALE ANALYSIS]</scope>
    <source>
        <strain>ATCC 208353 / W303-1A</strain>
    </source>
</reference>
<reference key="5">
    <citation type="journal article" date="2007" name="J. Proteome Res.">
        <title>Large-scale phosphorylation analysis of alpha-factor-arrested Saccharomyces cerevisiae.</title>
        <authorList>
            <person name="Li X."/>
            <person name="Gerber S.A."/>
            <person name="Rudner A.D."/>
            <person name="Beausoleil S.A."/>
            <person name="Haas W."/>
            <person name="Villen J."/>
            <person name="Elias J.E."/>
            <person name="Gygi S.P."/>
        </authorList>
    </citation>
    <scope>PHOSPHORYLATION [LARGE SCALE ANALYSIS] AT SER-81; THR-85 AND SER-1506</scope>
    <scope>IDENTIFICATION BY MASS SPECTROMETRY [LARGE SCALE ANALYSIS]</scope>
    <source>
        <strain>ADR376</strain>
    </source>
</reference>
<reference key="6">
    <citation type="journal article" date="2007" name="Proc. Natl. Acad. Sci. U.S.A.">
        <title>Analysis of phosphorylation sites on proteins from Saccharomyces cerevisiae by electron transfer dissociation (ETD) mass spectrometry.</title>
        <authorList>
            <person name="Chi A."/>
            <person name="Huttenhower C."/>
            <person name="Geer L.Y."/>
            <person name="Coon J.J."/>
            <person name="Syka J.E.P."/>
            <person name="Bai D.L."/>
            <person name="Shabanowitz J."/>
            <person name="Burke D.J."/>
            <person name="Troyanskaya O.G."/>
            <person name="Hunt D.F."/>
        </authorList>
    </citation>
    <scope>PHOSPHORYLATION [LARGE SCALE ANALYSIS] AT SER-53</scope>
    <scope>IDENTIFICATION BY MASS SPECTROMETRY [LARGE SCALE ANALYSIS]</scope>
</reference>
<reference key="7">
    <citation type="journal article" date="2008" name="Mol. Biol. Cell">
        <title>Protein kinases Fpk1p and Fpk2p are novel regulators of phospholipid asymmetry.</title>
        <authorList>
            <person name="Nakano K."/>
            <person name="Yamamoto T."/>
            <person name="Kishimoto T."/>
            <person name="Noji T."/>
            <person name="Tanaka K."/>
        </authorList>
    </citation>
    <scope>SUBCELLULAR LOCATION</scope>
    <scope>PHOSPHORYLATION BY FPK1 AND KIN82</scope>
</reference>
<reference key="8">
    <citation type="journal article" date="2008" name="Mol. Cell. Proteomics">
        <title>A multidimensional chromatography technology for in-depth phosphoproteome analysis.</title>
        <authorList>
            <person name="Albuquerque C.P."/>
            <person name="Smolka M.B."/>
            <person name="Payne S.H."/>
            <person name="Bafna V."/>
            <person name="Eng J."/>
            <person name="Zhou H."/>
        </authorList>
    </citation>
    <scope>PHOSPHORYLATION [LARGE SCALE ANALYSIS] AT SER-53; SER-351 AND SER-1506</scope>
    <scope>IDENTIFICATION BY MASS SPECTROMETRY [LARGE SCALE ANALYSIS]</scope>
</reference>
<reference key="9">
    <citation type="journal article" date="2009" name="J. Biol. Chem.">
        <title>Cdc50p plays a vital role in the ATPase reaction cycle of the putative aminophospholipid transporter Drs2p.</title>
        <authorList>
            <person name="Lenoir G."/>
            <person name="Williamson P."/>
            <person name="Puts C.F."/>
            <person name="Holthuis J.C."/>
        </authorList>
    </citation>
    <scope>INTERACTION WITH LEM3</scope>
    <scope>MUTAGENESIS OF ASP-667</scope>
</reference>
<reference key="10">
    <citation type="journal article" date="2009" name="Science">
        <title>Global analysis of Cdk1 substrate phosphorylation sites provides insights into evolution.</title>
        <authorList>
            <person name="Holt L.J."/>
            <person name="Tuch B.B."/>
            <person name="Villen J."/>
            <person name="Johnson A.D."/>
            <person name="Gygi S.P."/>
            <person name="Morgan D.O."/>
        </authorList>
    </citation>
    <scope>PHOSPHORYLATION [LARGE SCALE ANALYSIS] AT SER-53; THR-70; SER-81; THR-85; SER-92; THR-94; SER-104; THR-109; SER-365; SER-1506; THR-1551; SER-1552 AND SER-1563</scope>
    <scope>IDENTIFICATION BY MASS SPECTROMETRY [LARGE SCALE ANALYSIS]</scope>
</reference>
<reference key="11">
    <citation type="journal article" date="2012" name="J. Biol. Chem.">
        <title>Mapping functional interactions in a heterodimeric phospholipid pump.</title>
        <authorList>
            <person name="Puts C.F."/>
            <person name="Panatala R."/>
            <person name="Hennrich H."/>
            <person name="Tsareva A."/>
            <person name="Williamson P."/>
            <person name="Holthuis J.C."/>
        </authorList>
    </citation>
    <scope>FUNCTION</scope>
    <scope>CATALYTIC ACTIVITY</scope>
    <scope>IDENTIFICATION IN A COMPLEX WITH LEM3</scope>
    <scope>INTERACTION WITH LEM3</scope>
</reference>
<reference key="12">
    <citation type="journal article" date="2012" name="Proc. Natl. Acad. Sci. U.S.A.">
        <title>Identification of residues defining phospholipid flippase substrate specificity of type IV P-type ATPases.</title>
        <authorList>
            <person name="Baldridge R.D."/>
            <person name="Graham T.R."/>
        </authorList>
    </citation>
    <scope>FUNCTION</scope>
    <scope>CATALYTIC ACTIVITY</scope>
    <scope>SUBCELLULAR LOCATION</scope>
    <scope>MUTAGENESIS OF PHE-587; 618-TYR--SER-620 AND TYR-618</scope>
</reference>
<reference key="13">
    <citation type="journal article" date="2013" name="Proc. Natl. Acad. Sci. U.S.A.">
        <title>Two-gate mechanism for phospholipid selection and transport by type IV P-type ATPases.</title>
        <authorList>
            <person name="Baldridge R.D."/>
            <person name="Graham T.R."/>
        </authorList>
    </citation>
    <scope>FUNCTION</scope>
    <scope>CATALYTIC ACTIVITY</scope>
    <scope>MUTAGENESIS OF 230-GLY-ALA-231; 234-ILE-PHE-235; 240-PRO-GLY-241; ILE-545; ASN-550; PHE-551; ILE-555; VAL-558; PHE-565; GLY-568; ASN-571; TYR-574; TYR-575; LYS-578; GLU-586; PHE-587; GLY-588; VAL-604; VAL-606; TYR-618; VAL-621; GLU-622; ILE-623; LYS-1194 AND ILE-1235</scope>
</reference>
<reference key="14">
    <citation type="journal article" date="2016" name="J. Biol. Chem.">
        <title>The Essential Neo1 Protein from Budding Yeast Plays a Role in Establishing Aminophospholipid Asymmetry of the Plasma Membrane.</title>
        <authorList>
            <person name="Takar M."/>
            <person name="Wu Y."/>
            <person name="Graham T.R."/>
        </authorList>
    </citation>
    <scope>SUBCELLULAR LOCATION</scope>
</reference>
<reference key="15">
    <citation type="journal article" date="2019" name="J. Lipid Res.">
        <title>The PQ-loop protein Any1 segregates Drs2 and Neo1 functions required for viability and plasma membrane phospholipid asymmetry.</title>
        <authorList>
            <person name="Takar M."/>
            <person name="Huang Y."/>
            <person name="Graham T.R."/>
        </authorList>
    </citation>
    <scope>DISRUPTION PHENOTYPE</scope>
    <scope>MUTAGENESIS OF ASN-550</scope>
</reference>
<reference key="16">
    <citation type="journal article" date="2020" name="Biochim. Biophys. Acta">
        <title>Conserved mechanism of phospholipid substrate recognition by the P4-ATPase Neo1 from Saccharomyces cerevisiae.</title>
        <authorList>
            <person name="Huang Y."/>
            <person name="Takar M."/>
            <person name="Best J.T."/>
            <person name="Graham T.R."/>
        </authorList>
    </citation>
    <scope>FUNCTION</scope>
    <scope>CATALYTIC ACTIVITY</scope>
    <scope>MUTAGENESIS OF SER-243</scope>
</reference>
<reference key="17">
    <citation type="journal article" date="2020" name="J. Biol. Chem.">
        <title>Exofacial membrane composition and lipid metabolism regulates plasma membrane P4-ATPase substrate specificity.</title>
        <authorList>
            <person name="Jain B.K."/>
            <person name="Roland B.P."/>
            <person name="Graham T.R."/>
        </authorList>
    </citation>
    <scope>FUNCTION</scope>
    <scope>CATALYTIC ACTIVITY</scope>
    <scope>SUBCELLULAR LOCATION</scope>
    <scope>DISRUPTION PHENOTYPE</scope>
</reference>
<reference evidence="36 37 38" key="18">
    <citation type="journal article" date="2020" name="Elife">
        <title>Transport mechanism of P4 ATPase phosphatidylcholine flippases.</title>
        <authorList>
            <person name="Bai L."/>
            <person name="You Q."/>
            <person name="Jain B.K."/>
            <person name="Duan H.D."/>
            <person name="Kovach A."/>
            <person name="Graham T.R."/>
            <person name="Li H."/>
        </authorList>
    </citation>
    <scope>STRUCTURE BY ELECTRON MICROSCOPY (2.80 ANGSTROMS) IN COMPLEX WITH LEM3 AND MAGNESIUM</scope>
    <scope>FUNCTION</scope>
    <scope>CATALYTIC ACTIVITY</scope>
    <scope>COFACTOR</scope>
    <scope>IDENTIFICATION IN A COMPLEX WITH LEM3</scope>
    <scope>INTERACTION WITH LEM3</scope>
    <scope>SUBCELLULAR LOCATION</scope>
    <scope>MUTAGENESIS OF ARG-264; 609-TYR--SER-611; GLN-610; SER-611; TRP-652 AND ASN-1226</scope>
</reference>
<reference evidence="32 33 34 35 39 40" key="19">
    <citation type="journal article" date="2022" name="Cell Rep.">
        <title>Conformational changes of a phosphatidylcholine flippase in lipid membranes.</title>
        <authorList>
            <person name="Xu J."/>
            <person name="He Y."/>
            <person name="Wu X."/>
            <person name="Li L."/>
        </authorList>
    </citation>
    <scope>STRUCTURE BY ELECTRON MICROSCOPY (2.80 ANGSTROMS) IN COMPLEX WITH LEM3 AND MAGNESIUM</scope>
    <scope>FUNCTION</scope>
    <scope>CATALYTIC ACTIVITY</scope>
    <scope>COFACTOR</scope>
    <scope>IDENTIFICATION IN A COMPLEX WITH LEM3</scope>
    <scope>INTERACTION WITH LEM3</scope>
</reference>
<name>ATC5_YEAST</name>
<feature type="chain" id="PRO_0000046235" description="Phospholipid-transporting ATPase DNF1">
    <location>
        <begin position="1"/>
        <end position="1571"/>
    </location>
</feature>
<feature type="topological domain" description="Cytoplasmic" evidence="8">
    <location>
        <begin position="1"/>
        <end position="214"/>
    </location>
</feature>
<feature type="transmembrane region" description="Helical" evidence="8">
    <location>
        <begin position="215"/>
        <end position="235"/>
    </location>
</feature>
<feature type="topological domain" description="Extracellular" evidence="8">
    <location>
        <begin position="236"/>
        <end position="239"/>
    </location>
</feature>
<feature type="transmembrane region" description="Helical" evidence="8">
    <location>
        <begin position="240"/>
        <end position="260"/>
    </location>
</feature>
<feature type="topological domain" description="Cytoplasmic" evidence="8">
    <location>
        <begin position="261"/>
        <end position="553"/>
    </location>
</feature>
<feature type="transmembrane region" description="Helical" evidence="8">
    <location>
        <begin position="554"/>
        <end position="574"/>
    </location>
</feature>
<feature type="topological domain" description="Extracellular" evidence="8">
    <location>
        <begin position="575"/>
        <end position="594"/>
    </location>
</feature>
<feature type="transmembrane region" description="Helical" evidence="8">
    <location>
        <begin position="595"/>
        <end position="615"/>
    </location>
</feature>
<feature type="topological domain" description="Cytoplasmic" evidence="8">
    <location>
        <begin position="616"/>
        <end position="1188"/>
    </location>
</feature>
<feature type="transmembrane region" description="Helical" evidence="8">
    <location>
        <begin position="1189"/>
        <end position="1209"/>
    </location>
</feature>
<feature type="topological domain" description="Extracellular" evidence="8">
    <location>
        <begin position="1210"/>
        <end position="1219"/>
    </location>
</feature>
<feature type="transmembrane region" description="Helical" evidence="8">
    <location>
        <begin position="1220"/>
        <end position="1240"/>
    </location>
</feature>
<feature type="topological domain" description="Cytoplasmic" evidence="8">
    <location>
        <begin position="1241"/>
        <end position="1270"/>
    </location>
</feature>
<feature type="transmembrane region" description="Helical" evidence="8">
    <location>
        <begin position="1271"/>
        <end position="1291"/>
    </location>
</feature>
<feature type="topological domain" description="Extracellular" evidence="8">
    <location>
        <begin position="1292"/>
        <end position="1307"/>
    </location>
</feature>
<feature type="transmembrane region" description="Helical" evidence="8">
    <location>
        <begin position="1308"/>
        <end position="1328"/>
    </location>
</feature>
<feature type="topological domain" description="Cytoplasmic" evidence="8">
    <location>
        <begin position="1329"/>
        <end position="1334"/>
    </location>
</feature>
<feature type="transmembrane region" description="Helical" evidence="8">
    <location>
        <begin position="1335"/>
        <end position="1355"/>
    </location>
</feature>
<feature type="topological domain" description="Extracellular" evidence="8">
    <location>
        <begin position="1356"/>
        <end position="1375"/>
    </location>
</feature>
<feature type="transmembrane region" description="Helical" evidence="8">
    <location>
        <begin position="1376"/>
        <end position="1396"/>
    </location>
</feature>
<feature type="topological domain" description="Cytoplasmic" evidence="8">
    <location>
        <begin position="1397"/>
        <end position="1571"/>
    </location>
</feature>
<feature type="region of interest" description="Disordered" evidence="9">
    <location>
        <begin position="1"/>
        <end position="94"/>
    </location>
</feature>
<feature type="region of interest" description="Involved in phosphatidylcholine substrate selection" evidence="15">
    <location>
        <begin position="234"/>
        <end position="241"/>
    </location>
</feature>
<feature type="region of interest" description="Involved in phosphatidylcholine substrate selection" evidence="15">
    <location>
        <begin position="586"/>
        <end position="590"/>
    </location>
</feature>
<feature type="compositionally biased region" description="Basic and acidic residues" evidence="9">
    <location>
        <begin position="29"/>
        <end position="40"/>
    </location>
</feature>
<feature type="compositionally biased region" description="Polar residues" evidence="9">
    <location>
        <begin position="42"/>
        <end position="56"/>
    </location>
</feature>
<feature type="compositionally biased region" description="Acidic residues" evidence="9">
    <location>
        <begin position="66"/>
        <end position="76"/>
    </location>
</feature>
<feature type="compositionally biased region" description="Polar residues" evidence="9">
    <location>
        <begin position="80"/>
        <end position="93"/>
    </location>
</feature>
<feature type="active site" description="4-aspartylphosphate intermediate" evidence="7">
    <location>
        <position position="667"/>
    </location>
</feature>
<feature type="binding site" evidence="21 34 40">
    <location>
        <position position="667"/>
    </location>
    <ligand>
        <name>ATP</name>
        <dbReference type="ChEBI" id="CHEBI:30616"/>
    </ligand>
</feature>
<feature type="binding site" evidence="7">
    <location>
        <position position="667"/>
    </location>
    <ligand>
        <name>Mg(2+)</name>
        <dbReference type="ChEBI" id="CHEBI:18420"/>
    </ligand>
</feature>
<feature type="binding site" evidence="21 34">
    <location>
        <position position="668"/>
    </location>
    <ligand>
        <name>ATP</name>
        <dbReference type="ChEBI" id="CHEBI:30616"/>
    </ligand>
</feature>
<feature type="binding site" evidence="21 33 34 40">
    <location>
        <position position="669"/>
    </location>
    <ligand>
        <name>ATP</name>
        <dbReference type="ChEBI" id="CHEBI:30616"/>
    </ligand>
</feature>
<feature type="binding site" evidence="7">
    <location>
        <position position="669"/>
    </location>
    <ligand>
        <name>Mg(2+)</name>
        <dbReference type="ChEBI" id="CHEBI:18420"/>
    </ligand>
</feature>
<feature type="binding site" evidence="20 21 34 37">
    <location>
        <position position="801"/>
    </location>
    <ligand>
        <name>ATP</name>
        <dbReference type="ChEBI" id="CHEBI:30616"/>
    </ligand>
</feature>
<feature type="binding site" evidence="7">
    <location>
        <position position="842"/>
    </location>
    <ligand>
        <name>ATP</name>
        <dbReference type="ChEBI" id="CHEBI:30616"/>
    </ligand>
</feature>
<feature type="binding site" evidence="20 21 33 34 37 40">
    <location>
        <position position="844"/>
    </location>
    <ligand>
        <name>ATP</name>
        <dbReference type="ChEBI" id="CHEBI:30616"/>
    </ligand>
</feature>
<feature type="binding site" evidence="4">
    <location>
        <position position="847"/>
    </location>
    <ligand>
        <name>ATP</name>
        <dbReference type="ChEBI" id="CHEBI:30616"/>
    </ligand>
</feature>
<feature type="binding site" evidence="3">
    <location>
        <position position="871"/>
    </location>
    <ligand>
        <name>ATP</name>
        <dbReference type="ChEBI" id="CHEBI:30616"/>
    </ligand>
</feature>
<feature type="binding site" evidence="21 34">
    <location>
        <position position="909"/>
    </location>
    <ligand>
        <name>ATP</name>
        <dbReference type="ChEBI" id="CHEBI:30616"/>
    </ligand>
</feature>
<feature type="binding site" evidence="21 33">
    <location>
        <position position="910"/>
    </location>
    <ligand>
        <name>ATP</name>
        <dbReference type="ChEBI" id="CHEBI:30616"/>
    </ligand>
</feature>
<feature type="binding site" evidence="21 33 40">
    <location>
        <position position="989"/>
    </location>
    <ligand>
        <name>ATP</name>
        <dbReference type="ChEBI" id="CHEBI:30616"/>
    </ligand>
</feature>
<feature type="binding site" evidence="3">
    <location>
        <position position="990"/>
    </location>
    <ligand>
        <name>ATP</name>
        <dbReference type="ChEBI" id="CHEBI:30616"/>
    </ligand>
</feature>
<feature type="binding site" evidence="3">
    <location>
        <position position="991"/>
    </location>
    <ligand>
        <name>ATP</name>
        <dbReference type="ChEBI" id="CHEBI:30616"/>
    </ligand>
</feature>
<feature type="binding site" evidence="20 21 34 37">
    <location>
        <position position="1104"/>
    </location>
    <ligand>
        <name>ATP</name>
        <dbReference type="ChEBI" id="CHEBI:30616"/>
    </ligand>
</feature>
<feature type="binding site" evidence="21 34">
    <location>
        <position position="1110"/>
    </location>
    <ligand>
        <name>ATP</name>
        <dbReference type="ChEBI" id="CHEBI:30616"/>
    </ligand>
</feature>
<feature type="binding site" evidence="7">
    <location>
        <position position="1130"/>
    </location>
    <ligand>
        <name>Mg(2+)</name>
        <dbReference type="ChEBI" id="CHEBI:18420"/>
    </ligand>
</feature>
<feature type="binding site" evidence="7">
    <location>
        <position position="1133"/>
    </location>
    <ligand>
        <name>ATP</name>
        <dbReference type="ChEBI" id="CHEBI:30616"/>
    </ligand>
</feature>
<feature type="binding site" evidence="21 34">
    <location>
        <position position="1134"/>
    </location>
    <ligand>
        <name>ATP</name>
        <dbReference type="ChEBI" id="CHEBI:30616"/>
    </ligand>
</feature>
<feature type="binding site" evidence="6">
    <location>
        <position position="1134"/>
    </location>
    <ligand>
        <name>Mg(2+)</name>
        <dbReference type="ChEBI" id="CHEBI:18420"/>
    </ligand>
</feature>
<feature type="binding site" evidence="2">
    <location>
        <position position="1393"/>
    </location>
    <ligand>
        <name>a 1,2-diacyl-sn-glycero-3-phospho-L-serine</name>
        <dbReference type="ChEBI" id="CHEBI:57262"/>
    </ligand>
</feature>
<feature type="site" description="Involved in the release of the transported lipid into the cytosolic leaflet" evidence="1">
    <location>
        <position position="615"/>
    </location>
</feature>
<feature type="modified residue" description="Phosphoserine" evidence="41 43 44">
    <location>
        <position position="53"/>
    </location>
</feature>
<feature type="modified residue" description="Phosphothreonine" evidence="44">
    <location>
        <position position="70"/>
    </location>
</feature>
<feature type="modified residue" description="Phosphoserine" evidence="42 44">
    <location>
        <position position="81"/>
    </location>
</feature>
<feature type="modified residue" description="Phosphothreonine" evidence="42 44">
    <location>
        <position position="85"/>
    </location>
</feature>
<feature type="modified residue" description="Phosphoserine" evidence="44">
    <location>
        <position position="92"/>
    </location>
</feature>
<feature type="modified residue" description="Phosphothreonine" evidence="44">
    <location>
        <position position="94"/>
    </location>
</feature>
<feature type="modified residue" description="Phosphoserine" evidence="44">
    <location>
        <position position="104"/>
    </location>
</feature>
<feature type="modified residue" description="Phosphothreonine" evidence="44">
    <location>
        <position position="109"/>
    </location>
</feature>
<feature type="modified residue" description="Phosphoserine" evidence="43">
    <location>
        <position position="351"/>
    </location>
</feature>
<feature type="modified residue" description="Phosphoserine" evidence="5">
    <location>
        <position position="354"/>
    </location>
</feature>
<feature type="modified residue" description="Phosphoserine" evidence="5">
    <location>
        <position position="358"/>
    </location>
</feature>
<feature type="modified residue" description="Phosphoserine" evidence="44">
    <location>
        <position position="365"/>
    </location>
</feature>
<feature type="modified residue" description="Phosphotyrosine" evidence="5">
    <location>
        <position position="368"/>
    </location>
</feature>
<feature type="modified residue" description="Phosphoserine" evidence="42 43 44">
    <location>
        <position position="1506"/>
    </location>
</feature>
<feature type="modified residue" description="Phosphothreonine" evidence="44">
    <location>
        <position position="1551"/>
    </location>
</feature>
<feature type="modified residue" description="Phosphoserine" evidence="44">
    <location>
        <position position="1552"/>
    </location>
</feature>
<feature type="modified residue" description="Phosphoserine" evidence="44">
    <location>
        <position position="1563"/>
    </location>
</feature>
<feature type="cross-link" description="Glycyl lysine isopeptide (Lys-Gly) (interchain with G-Cter in ubiquitin)" evidence="5">
    <location>
        <position position="895"/>
    </location>
</feature>
<feature type="mutagenesis site" description="Increases phosphatidylserine uptake but not phosphatidic acid or sphingomyelin uptake." evidence="15">
    <original>GA</original>
    <variation>QQ</variation>
    <location>
        <begin position="230"/>
        <end position="231"/>
    </location>
</feature>
<feature type="mutagenesis site" description="Decreases phosphatidylcholine and phosphatidylethanolamine uptake." evidence="15">
    <original>IF</original>
    <variation>HV</variation>
    <location>
        <begin position="234"/>
        <end position="235"/>
    </location>
</feature>
<feature type="mutagenesis site" description="Decreases phosphatidylcholine and phosphatidylethanolamine uptake." evidence="15">
    <original>PG</original>
    <variation>RY</variation>
    <location>
        <begin position="240"/>
        <end position="241"/>
    </location>
</feature>
<feature type="mutagenesis site" description="Increases phosphatidylcholine and phosphatidylserine uptake." evidence="18">
    <original>S</original>
    <variation>Y</variation>
    <location>
        <position position="243"/>
    </location>
</feature>
<feature type="mutagenesis site" description="Increases glucosylceramide, phosphatidylethanolamine, and phosphatidylcholine uptake." evidence="20">
    <original>R</original>
    <variation>A</variation>
    <location>
        <position position="264"/>
    </location>
</feature>
<feature type="mutagenesis site" description="Decreases phosphatidylcholine and phosphatidylehtanolamine uptake." evidence="15">
    <original>I</original>
    <variation>T</variation>
    <location>
        <position position="545"/>
    </location>
</feature>
<feature type="mutagenesis site" description="Increases phosphatidylserine uptake." evidence="15 17">
    <original>N</original>
    <variation>I</variation>
    <variation>K</variation>
    <variation>S</variation>
    <variation>Y</variation>
    <location>
        <position position="550"/>
    </location>
</feature>
<feature type="mutagenesis site" description="Does not alter phosphatidic acid or sphingomyelin uptake." evidence="15 17">
    <original>N</original>
    <variation>K</variation>
    <variation>S</variation>
    <location>
        <position position="550"/>
    </location>
</feature>
<feature type="mutagenesis site" description="Decreases phosphatidylcholine and phosphatidylehtanolamine uptake." evidence="15">
    <original>F</original>
    <variation>L</variation>
    <location>
        <position position="551"/>
    </location>
</feature>
<feature type="mutagenesis site" description="Decreases phosphatidylcholine and phosphatidylehtanolamine uptake." evidence="15">
    <original>I</original>
    <variation>L</variation>
    <location>
        <position position="555"/>
    </location>
</feature>
<feature type="mutagenesis site" description="Decreases phosphatidylcholine and phosphatidylehtanolamine uptake." evidence="15">
    <original>V</original>
    <variation>E</variation>
    <location>
        <position position="558"/>
    </location>
</feature>
<feature type="mutagenesis site" description="Decreases phosphatidylcholine and phosphatidylehtanolamine uptake." evidence="15">
    <original>F</original>
    <variation>L</variation>
    <location>
        <position position="565"/>
    </location>
</feature>
<feature type="mutagenesis site" description="Decreases phosphatidylcholine, phosphatidylserine and phosphatidylethanolamine uptake." evidence="15">
    <original>G</original>
    <variation>A</variation>
    <location>
        <position position="568"/>
    </location>
</feature>
<feature type="mutagenesis site" description="Decreases phosphatidylcholine, phosphatidylserine and phosphatidylethanolamine uptake." evidence="15">
    <original>N</original>
    <variation>A</variation>
    <location>
        <position position="571"/>
    </location>
</feature>
<feature type="mutagenesis site" description="Decreases phosphatidylcholine, phosphatidylserine and phosphatidylethanolamine uptake." evidence="15">
    <original>Y</original>
    <variation>A</variation>
    <location>
        <position position="574"/>
    </location>
</feature>
<feature type="mutagenesis site" description="Decreases phosphatidylcholine, phosphatidylserine and phosphatidylethanolamine uptake." evidence="15">
    <original>Y</original>
    <variation>A</variation>
    <location>
        <position position="575"/>
    </location>
</feature>
<feature type="mutagenesis site" description="Decreases phosphatidylcholine and phosphatidylethanolamine uptake." evidence="15">
    <original>Y</original>
    <variation>N</variation>
    <variation>S</variation>
    <location>
        <position position="575"/>
    </location>
</feature>
<feature type="mutagenesis site" description="Decreases phosphatidylcholine, phosphatidylserine and phosphatidylethanolamine uptake." evidence="15">
    <original>K</original>
    <variation>A</variation>
    <location>
        <position position="578"/>
    </location>
</feature>
<feature type="mutagenesis site" description="Increases phosphatidylserine uptake." evidence="15">
    <original>K</original>
    <variation>E</variation>
    <location>
        <position position="578"/>
    </location>
</feature>
<feature type="mutagenesis site" description="Decreases phosphatidylcholine, phosphatidylserine and phosphatidylethanolamine uptake." evidence="15">
    <original>E</original>
    <variation>A</variation>
    <location>
        <position position="586"/>
    </location>
</feature>
<feature type="mutagenesis site" description="Decreases phosphatidylcholine, phosphatidylserine and phosphatidylethanolamine uptake." evidence="15">
    <original>F</original>
    <variation>A</variation>
    <location>
        <position position="587"/>
    </location>
</feature>
<feature type="mutagenesis site" description="Decreases phosphatidylcholine uptake, but not phosphatidylethanolamine uptake." evidence="13">
    <original>F</original>
    <variation>Y</variation>
    <variation>L</variation>
    <location>
        <position position="587"/>
    </location>
</feature>
<feature type="mutagenesis site" description="Decreases phosphatidylcholine and phosphatidylserine uptake." evidence="15">
    <original>G</original>
    <variation>A</variation>
    <location>
        <position position="588"/>
    </location>
</feature>
<feature type="mutagenesis site" description="Decreases phosphatidylcholine, phosphatidylserine and phosphatidylethanolamine uptake." evidence="15">
    <original>V</original>
    <variation>A</variation>
    <location>
        <position position="604"/>
    </location>
</feature>
<feature type="mutagenesis site" description="Decreases phosphatidylcholine and phosphatidylethanolamine uptake." evidence="15">
    <original>V</original>
    <variation>A</variation>
    <location>
        <position position="606"/>
    </location>
</feature>
<feature type="mutagenesis site" description="Decreases glucosylceramide and phosphatidylethanolamine uptake, but not phosphatidylcholine uptake." evidence="20">
    <original>YQS</original>
    <variation>FSN</variation>
    <location>
        <begin position="609"/>
        <end position="611"/>
    </location>
</feature>
<feature type="mutagenesis site" description="Decreases glucosylceramide and phosphatidylethanolamine uptake, but not phosphatidylcholine uptake." evidence="20">
    <original>Q</original>
    <variation>A</variation>
    <location>
        <position position="610"/>
    </location>
</feature>
<feature type="mutagenesis site" description="Increases glucosylceramide, phosphatidylethanolamine, and phosphatidylcholine uptake." evidence="20">
    <original>S</original>
    <variation>A</variation>
    <location>
        <position position="611"/>
    </location>
</feature>
<feature type="mutagenesis site" description="Increases phosphatidylserine, phosphatidylcholine, and sphingomyelin uptake." evidence="13">
    <original>YIS</original>
    <variation>FVT</variation>
    <location>
        <begin position="618"/>
        <end position="620"/>
    </location>
</feature>
<feature type="mutagenesis site" description="Decreases phosphatidylcholine and phosphatidylethanolamine uptake." evidence="15">
    <original>Y</original>
    <variation>C</variation>
    <location>
        <position position="618"/>
    </location>
</feature>
<feature type="mutagenesis site" description="Increases phosphatidylserine uptake." evidence="13">
    <original>Y</original>
    <variation>F</variation>
    <location>
        <position position="618"/>
    </location>
</feature>
<feature type="mutagenesis site" description="Decreases phosphatidylcholine and phosphatidylethanolamine uptake, and increases phosphatidylserine uptake." evidence="15">
    <original>V</original>
    <variation>A</variation>
    <location>
        <position position="621"/>
    </location>
</feature>
<feature type="mutagenesis site" description="Decreases phosphatidylcholine and increases phosphatidylserine uptake." evidence="15">
    <original>E</original>
    <variation>V</variation>
    <location>
        <position position="622"/>
    </location>
</feature>
<feature type="mutagenesis site" description="Decreases phosphatidylcholine and phosphatidylethanolamine uptake." evidence="15">
    <original>I</original>
    <variation>F</variation>
    <location>
        <position position="623"/>
    </location>
</feature>
<feature type="mutagenesis site" description="Decreases glucosylceramide, phosphatidylethanolamine, and phosphatidylcholine uptake." evidence="20">
    <original>W</original>
    <variation>A</variation>
    <variation>S</variation>
    <location>
        <position position="652"/>
    </location>
</feature>
<feature type="mutagenesis site" description="Decreases interaction with LEM3." evidence="12">
    <original>D</original>
    <variation>N</variation>
    <variation>E</variation>
    <location>
        <position position="667"/>
    </location>
</feature>
<feature type="mutagenesis site" description="Decreases phosphatidylcholine, phosphatidylserine and phosphatidylethanolamine uptake." evidence="15">
    <original>K</original>
    <variation>A</variation>
    <variation>R</variation>
    <location>
        <position position="1194"/>
    </location>
</feature>
<feature type="mutagenesis site" description="Decreases glucosylceramide, phosphatidylethanolamine, and phosphatidylcholine uptake." evidence="20">
    <original>N</original>
    <variation>A</variation>
    <location>
        <position position="1226"/>
    </location>
</feature>
<feature type="mutagenesis site" description="Increases phosphatidylcholine, phosphatidylserine, phosphatidylethanolamine and sphingomyelin uptake, but not phosphatidic acid uptake." evidence="15">
    <original>I</original>
    <variation>F</variation>
    <location>
        <position position="1235"/>
    </location>
</feature>
<feature type="strand" evidence="48">
    <location>
        <begin position="167"/>
        <end position="174"/>
    </location>
</feature>
<feature type="helix" evidence="48">
    <location>
        <begin position="178"/>
        <end position="180"/>
    </location>
</feature>
<feature type="strand" evidence="48">
    <location>
        <begin position="183"/>
        <end position="188"/>
    </location>
</feature>
<feature type="turn" evidence="48">
    <location>
        <begin position="203"/>
        <end position="205"/>
    </location>
</feature>
<feature type="helix" evidence="48">
    <location>
        <begin position="206"/>
        <end position="214"/>
    </location>
</feature>
<feature type="helix" evidence="48">
    <location>
        <begin position="218"/>
        <end position="233"/>
    </location>
</feature>
<feature type="turn" evidence="48">
    <location>
        <begin position="235"/>
        <end position="237"/>
    </location>
</feature>
<feature type="strand" evidence="48">
    <location>
        <begin position="242"/>
        <end position="244"/>
    </location>
</feature>
<feature type="helix" evidence="48">
    <location>
        <begin position="245"/>
        <end position="273"/>
    </location>
</feature>
<feature type="strand" evidence="48">
    <location>
        <begin position="276"/>
        <end position="280"/>
    </location>
</feature>
<feature type="strand" evidence="48">
    <location>
        <begin position="383"/>
        <end position="385"/>
    </location>
</feature>
<feature type="strand" evidence="48">
    <location>
        <begin position="393"/>
        <end position="398"/>
    </location>
</feature>
<feature type="strand" evidence="48">
    <location>
        <begin position="406"/>
        <end position="410"/>
    </location>
</feature>
<feature type="strand" evidence="48">
    <location>
        <begin position="417"/>
        <end position="426"/>
    </location>
</feature>
<feature type="helix" evidence="46">
    <location>
        <begin position="427"/>
        <end position="429"/>
    </location>
</feature>
<feature type="strand" evidence="48">
    <location>
        <begin position="430"/>
        <end position="434"/>
    </location>
</feature>
<feature type="turn" evidence="48">
    <location>
        <begin position="436"/>
        <end position="438"/>
    </location>
</feature>
<feature type="strand" evidence="48">
    <location>
        <begin position="443"/>
        <end position="448"/>
    </location>
</feature>
<feature type="turn" evidence="48">
    <location>
        <begin position="452"/>
        <end position="455"/>
    </location>
</feature>
<feature type="helix" evidence="48">
    <location>
        <begin position="459"/>
        <end position="464"/>
    </location>
</feature>
<feature type="strand" evidence="48">
    <location>
        <begin position="467"/>
        <end position="472"/>
    </location>
</feature>
<feature type="strand" evidence="48">
    <location>
        <begin position="483"/>
        <end position="488"/>
    </location>
</feature>
<feature type="strand" evidence="48">
    <location>
        <begin position="490"/>
        <end position="492"/>
    </location>
</feature>
<feature type="strand" evidence="48">
    <location>
        <begin position="495"/>
        <end position="500"/>
    </location>
</feature>
<feature type="helix" evidence="48">
    <location>
        <begin position="502"/>
        <end position="504"/>
    </location>
</feature>
<feature type="strand" evidence="48">
    <location>
        <begin position="511"/>
        <end position="514"/>
    </location>
</feature>
<feature type="strand" evidence="48">
    <location>
        <begin position="516"/>
        <end position="524"/>
    </location>
</feature>
<feature type="helix" evidence="48">
    <location>
        <begin position="526"/>
        <end position="528"/>
    </location>
</feature>
<feature type="helix" evidence="48">
    <location>
        <begin position="530"/>
        <end position="535"/>
    </location>
</feature>
<feature type="helix" evidence="48">
    <location>
        <begin position="544"/>
        <end position="576"/>
    </location>
</feature>
<feature type="strand" evidence="47">
    <location>
        <begin position="578"/>
        <end position="580"/>
    </location>
</feature>
<feature type="helix" evidence="48">
    <location>
        <begin position="581"/>
        <end position="585"/>
    </location>
</feature>
<feature type="strand" evidence="45">
    <location>
        <begin position="591"/>
        <end position="593"/>
    </location>
</feature>
<feature type="helix" evidence="48">
    <location>
        <begin position="594"/>
        <end position="608"/>
    </location>
</feature>
<feature type="helix" evidence="48">
    <location>
        <begin position="610"/>
        <end position="612"/>
    </location>
</feature>
<feature type="helix" evidence="48">
    <location>
        <begin position="616"/>
        <end position="633"/>
    </location>
</feature>
<feature type="helix" evidence="49">
    <location>
        <begin position="636"/>
        <end position="638"/>
    </location>
</feature>
<feature type="turn" evidence="48">
    <location>
        <begin position="641"/>
        <end position="644"/>
    </location>
</feature>
<feature type="strand" evidence="48">
    <location>
        <begin position="648"/>
        <end position="650"/>
    </location>
</feature>
<feature type="helix" evidence="48">
    <location>
        <begin position="655"/>
        <end position="659"/>
    </location>
</feature>
<feature type="strand" evidence="48">
    <location>
        <begin position="660"/>
        <end position="667"/>
    </location>
</feature>
<feature type="helix" evidence="48">
    <location>
        <begin position="668"/>
        <end position="672"/>
    </location>
</feature>
<feature type="strand" evidence="48">
    <location>
        <begin position="673"/>
        <end position="684"/>
    </location>
</feature>
<feature type="strand" evidence="48">
    <location>
        <begin position="687"/>
        <end position="689"/>
    </location>
</feature>
<feature type="helix" evidence="48">
    <location>
        <begin position="695"/>
        <end position="704"/>
    </location>
</feature>
<feature type="helix" evidence="48">
    <location>
        <begin position="708"/>
        <end position="733"/>
    </location>
</feature>
<feature type="strand" evidence="49">
    <location>
        <begin position="735"/>
        <end position="737"/>
    </location>
</feature>
<feature type="helix" evidence="48">
    <location>
        <begin position="741"/>
        <end position="743"/>
    </location>
</feature>
<feature type="helix" evidence="48">
    <location>
        <begin position="749"/>
        <end position="756"/>
    </location>
</feature>
<feature type="turn" evidence="48">
    <location>
        <begin position="757"/>
        <end position="759"/>
    </location>
</feature>
<feature type="helix" evidence="48">
    <location>
        <begin position="761"/>
        <end position="776"/>
    </location>
</feature>
<feature type="strand" evidence="49">
    <location>
        <begin position="781"/>
        <end position="784"/>
    </location>
</feature>
<feature type="strand" evidence="49">
    <location>
        <begin position="786"/>
        <end position="788"/>
    </location>
</feature>
<feature type="strand" evidence="49">
    <location>
        <begin position="791"/>
        <end position="795"/>
    </location>
</feature>
<feature type="helix" evidence="48">
    <location>
        <begin position="799"/>
        <end position="811"/>
    </location>
</feature>
<feature type="strand" evidence="48">
    <location>
        <begin position="813"/>
        <end position="816"/>
    </location>
</feature>
<feature type="strand" evidence="48">
    <location>
        <begin position="820"/>
        <end position="822"/>
    </location>
</feature>
<feature type="strand" evidence="48">
    <location>
        <begin position="824"/>
        <end position="827"/>
    </location>
</feature>
<feature type="strand" evidence="48">
    <location>
        <begin position="830"/>
        <end position="833"/>
    </location>
</feature>
<feature type="strand" evidence="48">
    <location>
        <begin position="836"/>
        <end position="840"/>
    </location>
</feature>
<feature type="turn" evidence="48">
    <location>
        <begin position="844"/>
        <end position="846"/>
    </location>
</feature>
<feature type="strand" evidence="48">
    <location>
        <begin position="848"/>
        <end position="855"/>
    </location>
</feature>
<feature type="strand" evidence="50">
    <location>
        <begin position="858"/>
        <end position="862"/>
    </location>
</feature>
<feature type="strand" evidence="48">
    <location>
        <begin position="865"/>
        <end position="872"/>
    </location>
</feature>
<feature type="helix" evidence="48">
    <location>
        <begin position="874"/>
        <end position="879"/>
    </location>
</feature>
<feature type="turn" evidence="49">
    <location>
        <begin position="888"/>
        <end position="891"/>
    </location>
</feature>
<feature type="helix" evidence="48">
    <location>
        <begin position="892"/>
        <end position="905"/>
    </location>
</feature>
<feature type="strand" evidence="48">
    <location>
        <begin position="909"/>
        <end position="918"/>
    </location>
</feature>
<feature type="helix" evidence="48">
    <location>
        <begin position="920"/>
        <end position="935"/>
    </location>
</feature>
<feature type="helix" evidence="48">
    <location>
        <begin position="940"/>
        <end position="952"/>
    </location>
</feature>
<feature type="strand" evidence="48">
    <location>
        <begin position="956"/>
        <end position="967"/>
    </location>
</feature>
<feature type="helix" evidence="48">
    <location>
        <begin position="971"/>
        <end position="980"/>
    </location>
</feature>
<feature type="strand" evidence="48">
    <location>
        <begin position="984"/>
        <end position="988"/>
    </location>
</feature>
<feature type="helix" evidence="48">
    <location>
        <begin position="993"/>
        <end position="1002"/>
    </location>
</feature>
<feature type="turn" evidence="45">
    <location>
        <begin position="1007"/>
        <end position="1009"/>
    </location>
</feature>
<feature type="strand" evidence="48">
    <location>
        <begin position="1011"/>
        <end position="1014"/>
    </location>
</feature>
<feature type="helix" evidence="48">
    <location>
        <begin position="1019"/>
        <end position="1025"/>
    </location>
</feature>
<feature type="turn" evidence="48">
    <location>
        <begin position="1029"/>
        <end position="1031"/>
    </location>
</feature>
<feature type="helix" evidence="48">
    <location>
        <begin position="1032"/>
        <end position="1043"/>
    </location>
</feature>
<feature type="turn" evidence="50">
    <location>
        <begin position="1044"/>
        <end position="1047"/>
    </location>
</feature>
<feature type="helix" evidence="48">
    <location>
        <begin position="1051"/>
        <end position="1059"/>
    </location>
</feature>
<feature type="strand" evidence="48">
    <location>
        <begin position="1068"/>
        <end position="1072"/>
    </location>
</feature>
<feature type="helix" evidence="48">
    <location>
        <begin position="1074"/>
        <end position="1082"/>
    </location>
</feature>
<feature type="helix" evidence="48">
    <location>
        <begin position="1084"/>
        <end position="1095"/>
    </location>
</feature>
<feature type="strand" evidence="48">
    <location>
        <begin position="1096"/>
        <end position="1102"/>
    </location>
</feature>
<feature type="helix" evidence="48">
    <location>
        <begin position="1107"/>
        <end position="1119"/>
    </location>
</feature>
<feature type="turn" evidence="48">
    <location>
        <begin position="1120"/>
        <end position="1122"/>
    </location>
</feature>
<feature type="strand" evidence="48">
    <location>
        <begin position="1124"/>
        <end position="1132"/>
    </location>
</feature>
<feature type="helix" evidence="48">
    <location>
        <begin position="1133"/>
        <end position="1139"/>
    </location>
</feature>
<feature type="strand" evidence="48">
    <location>
        <begin position="1141"/>
        <end position="1147"/>
    </location>
</feature>
<feature type="strand" evidence="46">
    <location>
        <begin position="1149"/>
        <end position="1151"/>
    </location>
</feature>
<feature type="helix" evidence="48">
    <location>
        <begin position="1154"/>
        <end position="1157"/>
    </location>
</feature>
<feature type="strand" evidence="48">
    <location>
        <begin position="1159"/>
        <end position="1165"/>
    </location>
</feature>
<feature type="helix" evidence="48">
    <location>
        <begin position="1168"/>
        <end position="1206"/>
    </location>
</feature>
<feature type="turn" evidence="48">
    <location>
        <begin position="1207"/>
        <end position="1211"/>
    </location>
</feature>
<feature type="helix" evidence="48">
    <location>
        <begin position="1219"/>
        <end position="1227"/>
    </location>
</feature>
<feature type="helix" evidence="48">
    <location>
        <begin position="1231"/>
        <end position="1240"/>
    </location>
</feature>
<feature type="helix" evidence="48">
    <location>
        <begin position="1246"/>
        <end position="1251"/>
    </location>
</feature>
<feature type="helix" evidence="48">
    <location>
        <begin position="1253"/>
        <end position="1256"/>
    </location>
</feature>
<feature type="helix" evidence="48">
    <location>
        <begin position="1257"/>
        <end position="1261"/>
    </location>
</feature>
<feature type="helix" evidence="48">
    <location>
        <begin position="1267"/>
        <end position="1292"/>
    </location>
</feature>
<feature type="turn" evidence="48">
    <location>
        <begin position="1293"/>
        <end position="1295"/>
    </location>
</feature>
<feature type="strand" evidence="46">
    <location>
        <begin position="1299"/>
        <end position="1302"/>
    </location>
</feature>
<feature type="helix" evidence="48">
    <location>
        <begin position="1308"/>
        <end position="1329"/>
    </location>
</feature>
<feature type="strand" evidence="47">
    <location>
        <begin position="1332"/>
        <end position="1335"/>
    </location>
</feature>
<feature type="helix" evidence="48">
    <location>
        <begin position="1336"/>
        <end position="1357"/>
    </location>
</feature>
<feature type="strand" evidence="48">
    <location>
        <begin position="1362"/>
        <end position="1365"/>
    </location>
</feature>
<feature type="helix" evidence="48">
    <location>
        <begin position="1368"/>
        <end position="1373"/>
    </location>
</feature>
<feature type="helix" evidence="48">
    <location>
        <begin position="1376"/>
        <end position="1403"/>
    </location>
</feature>
<feature type="helix" evidence="48">
    <location>
        <begin position="1407"/>
        <end position="1416"/>
    </location>
</feature>
<feature type="turn" evidence="48">
    <location>
        <begin position="1417"/>
        <end position="1422"/>
    </location>
</feature>
<feature type="strand" evidence="47">
    <location>
        <begin position="1432"/>
        <end position="1434"/>
    </location>
</feature>
<protein>
    <recommendedName>
        <fullName>Phospholipid-transporting ATPase DNF1</fullName>
        <ecNumber evidence="24 25 26 28 29 30 31">7.6.2.1</ecNumber>
    </recommendedName>
    <alternativeName>
        <fullName>Flippase DNF1</fullName>
    </alternativeName>
</protein>
<dbReference type="EC" id="7.6.2.1" evidence="24 25 26 28 29 30 31"/>
<dbReference type="EMBL" id="U18922">
    <property type="protein sequence ID" value="AAB64693.1"/>
    <property type="molecule type" value="Genomic_DNA"/>
</dbReference>
<dbReference type="EMBL" id="BK006939">
    <property type="protein sequence ID" value="DAA07828.1"/>
    <property type="molecule type" value="Genomic_DNA"/>
</dbReference>
<dbReference type="PIR" id="S50669">
    <property type="entry name" value="S50669"/>
</dbReference>
<dbReference type="RefSeq" id="NP_011093.3">
    <property type="nucleotide sequence ID" value="NM_001179056.3"/>
</dbReference>
<dbReference type="PDB" id="7DRX">
    <property type="method" value="EM"/>
    <property type="resolution" value="2.90 A"/>
    <property type="chains" value="A=1-1571"/>
</dbReference>
<dbReference type="PDB" id="7DSH">
    <property type="method" value="EM"/>
    <property type="resolution" value="3.67 A"/>
    <property type="chains" value="A=1-1571"/>
</dbReference>
<dbReference type="PDB" id="7DSI">
    <property type="method" value="EM"/>
    <property type="resolution" value="3.21 A"/>
    <property type="chains" value="A=1-1571"/>
</dbReference>
<dbReference type="PDB" id="7F7F">
    <property type="method" value="EM"/>
    <property type="resolution" value="3.81 A"/>
    <property type="chains" value="A=1-1571"/>
</dbReference>
<dbReference type="PDB" id="7KY6">
    <property type="method" value="EM"/>
    <property type="resolution" value="3.10 A"/>
    <property type="chains" value="A=1-1571"/>
</dbReference>
<dbReference type="PDB" id="7KYB">
    <property type="method" value="EM"/>
    <property type="resolution" value="3.20 A"/>
    <property type="chains" value="A=1-1571"/>
</dbReference>
<dbReference type="PDB" id="7KYC">
    <property type="method" value="EM"/>
    <property type="resolution" value="2.80 A"/>
    <property type="chains" value="A=1-1571"/>
</dbReference>
<dbReference type="PDB" id="7WHV">
    <property type="method" value="EM"/>
    <property type="resolution" value="2.80 A"/>
    <property type="chains" value="A=1-1571"/>
</dbReference>
<dbReference type="PDB" id="7WHW">
    <property type="method" value="EM"/>
    <property type="resolution" value="3.10 A"/>
    <property type="chains" value="A=1-1571"/>
</dbReference>
<dbReference type="PDBsum" id="7DRX"/>
<dbReference type="PDBsum" id="7DSH"/>
<dbReference type="PDBsum" id="7DSI"/>
<dbReference type="PDBsum" id="7F7F"/>
<dbReference type="PDBsum" id="7KY6"/>
<dbReference type="PDBsum" id="7KYB"/>
<dbReference type="PDBsum" id="7KYC"/>
<dbReference type="PDBsum" id="7WHV"/>
<dbReference type="PDBsum" id="7WHW"/>
<dbReference type="EMDB" id="EMD-23069"/>
<dbReference type="EMDB" id="EMD-23074"/>
<dbReference type="EMDB" id="EMD-23075"/>
<dbReference type="EMDB" id="EMD-30829"/>
<dbReference type="EMDB" id="EMD-30833"/>
<dbReference type="EMDB" id="EMD-30834"/>
<dbReference type="EMDB" id="EMD-31487"/>
<dbReference type="EMDB" id="EMD-32512"/>
<dbReference type="EMDB" id="EMD-32513"/>
<dbReference type="SMR" id="P32660"/>
<dbReference type="BioGRID" id="36919">
    <property type="interactions" value="157"/>
</dbReference>
<dbReference type="ComplexPortal" id="CPX-1021">
    <property type="entry name" value="DNF1-LEM3 P4-ATPase complex"/>
</dbReference>
<dbReference type="DIP" id="DIP-7949N"/>
<dbReference type="FunCoup" id="P32660">
    <property type="interactions" value="62"/>
</dbReference>
<dbReference type="IntAct" id="P32660">
    <property type="interactions" value="33"/>
</dbReference>
<dbReference type="MINT" id="P32660"/>
<dbReference type="STRING" id="4932.YER166W"/>
<dbReference type="TCDB" id="3.A.3.8.4">
    <property type="family name" value="the p-type atpase (p-atpase) superfamily"/>
</dbReference>
<dbReference type="iPTMnet" id="P32660"/>
<dbReference type="PaxDb" id="4932-YER166W"/>
<dbReference type="PeptideAtlas" id="P32660"/>
<dbReference type="EnsemblFungi" id="YER166W_mRNA">
    <property type="protein sequence ID" value="YER166W"/>
    <property type="gene ID" value="YER166W"/>
</dbReference>
<dbReference type="GeneID" id="856913"/>
<dbReference type="KEGG" id="sce:YER166W"/>
<dbReference type="AGR" id="SGD:S000000968"/>
<dbReference type="SGD" id="S000000968">
    <property type="gene designation" value="DNF1"/>
</dbReference>
<dbReference type="VEuPathDB" id="FungiDB:YER166W"/>
<dbReference type="eggNOG" id="KOG0206">
    <property type="taxonomic scope" value="Eukaryota"/>
</dbReference>
<dbReference type="GeneTree" id="ENSGT00940000167741"/>
<dbReference type="HOGENOM" id="CLU_000846_0_1_1"/>
<dbReference type="InParanoid" id="P32660"/>
<dbReference type="OMA" id="QALRCGR"/>
<dbReference type="OrthoDB" id="377733at2759"/>
<dbReference type="BioCyc" id="YEAST:G3O-30327-MONOMER"/>
<dbReference type="BRENDA" id="7.6.2.1">
    <property type="organism ID" value="984"/>
</dbReference>
<dbReference type="Reactome" id="R-SCE-6798695">
    <property type="pathway name" value="Neutrophil degranulation"/>
</dbReference>
<dbReference type="Reactome" id="R-SCE-936837">
    <property type="pathway name" value="Ion transport by P-type ATPases"/>
</dbReference>
<dbReference type="BioGRID-ORCS" id="856913">
    <property type="hits" value="1 hit in 10 CRISPR screens"/>
</dbReference>
<dbReference type="PRO" id="PR:P32660"/>
<dbReference type="Proteomes" id="UP000002311">
    <property type="component" value="Chromosome V"/>
</dbReference>
<dbReference type="RNAct" id="P32660">
    <property type="molecule type" value="protein"/>
</dbReference>
<dbReference type="GO" id="GO:0071944">
    <property type="term" value="C:cell periphery"/>
    <property type="evidence" value="ECO:0007005"/>
    <property type="project" value="SGD"/>
</dbReference>
<dbReference type="GO" id="GO:0030428">
    <property type="term" value="C:cell septum"/>
    <property type="evidence" value="ECO:0007669"/>
    <property type="project" value="UniProtKB-SubCell"/>
</dbReference>
<dbReference type="GO" id="GO:0005935">
    <property type="term" value="C:cellular bud neck"/>
    <property type="evidence" value="ECO:0007005"/>
    <property type="project" value="SGD"/>
</dbReference>
<dbReference type="GO" id="GO:0005783">
    <property type="term" value="C:endoplasmic reticulum"/>
    <property type="evidence" value="ECO:0007005"/>
    <property type="project" value="SGD"/>
</dbReference>
<dbReference type="GO" id="GO:0010008">
    <property type="term" value="C:endosome membrane"/>
    <property type="evidence" value="ECO:0007669"/>
    <property type="project" value="UniProtKB-SubCell"/>
</dbReference>
<dbReference type="GO" id="GO:0005794">
    <property type="term" value="C:Golgi apparatus"/>
    <property type="evidence" value="ECO:0007669"/>
    <property type="project" value="UniProtKB-SubCell"/>
</dbReference>
<dbReference type="GO" id="GO:0070867">
    <property type="term" value="C:mating projection tip membrane"/>
    <property type="evidence" value="ECO:0000314"/>
    <property type="project" value="SGD"/>
</dbReference>
<dbReference type="GO" id="GO:0005739">
    <property type="term" value="C:mitochondrion"/>
    <property type="evidence" value="ECO:0007005"/>
    <property type="project" value="SGD"/>
</dbReference>
<dbReference type="GO" id="GO:1990531">
    <property type="term" value="C:phospholipid-translocating ATPase complex"/>
    <property type="evidence" value="ECO:0000353"/>
    <property type="project" value="SGD"/>
</dbReference>
<dbReference type="GO" id="GO:0005886">
    <property type="term" value="C:plasma membrane"/>
    <property type="evidence" value="ECO:0000314"/>
    <property type="project" value="SGD"/>
</dbReference>
<dbReference type="GO" id="GO:0005524">
    <property type="term" value="F:ATP binding"/>
    <property type="evidence" value="ECO:0007669"/>
    <property type="project" value="UniProtKB-KW"/>
</dbReference>
<dbReference type="GO" id="GO:0016887">
    <property type="term" value="F:ATP hydrolysis activity"/>
    <property type="evidence" value="ECO:0007669"/>
    <property type="project" value="InterPro"/>
</dbReference>
<dbReference type="GO" id="GO:0140326">
    <property type="term" value="F:ATPase-coupled intramembrane lipid transporter activity"/>
    <property type="evidence" value="ECO:0000318"/>
    <property type="project" value="GO_Central"/>
</dbReference>
<dbReference type="GO" id="GO:0140351">
    <property type="term" value="F:glycosylceramide flippase activity"/>
    <property type="evidence" value="ECO:0000314"/>
    <property type="project" value="UniProtKB"/>
</dbReference>
<dbReference type="GO" id="GO:0042802">
    <property type="term" value="F:identical protein binding"/>
    <property type="evidence" value="ECO:0000353"/>
    <property type="project" value="IntAct"/>
</dbReference>
<dbReference type="GO" id="GO:0000287">
    <property type="term" value="F:magnesium ion binding"/>
    <property type="evidence" value="ECO:0007669"/>
    <property type="project" value="InterPro"/>
</dbReference>
<dbReference type="GO" id="GO:0140345">
    <property type="term" value="F:phosphatidylcholine flippase activity"/>
    <property type="evidence" value="ECO:0000314"/>
    <property type="project" value="UniProtKB"/>
</dbReference>
<dbReference type="GO" id="GO:0090554">
    <property type="term" value="F:phosphatidylcholine floppase activity"/>
    <property type="evidence" value="ECO:0007669"/>
    <property type="project" value="RHEA"/>
</dbReference>
<dbReference type="GO" id="GO:0090555">
    <property type="term" value="F:phosphatidylethanolamine flippase activity"/>
    <property type="evidence" value="ECO:0000314"/>
    <property type="project" value="UniProtKB"/>
</dbReference>
<dbReference type="GO" id="GO:0140346">
    <property type="term" value="F:phosphatidylserine flippase activity"/>
    <property type="evidence" value="ECO:0000314"/>
    <property type="project" value="UniProtKB"/>
</dbReference>
<dbReference type="GO" id="GO:0090556">
    <property type="term" value="F:phosphatidylserine floppase activity"/>
    <property type="evidence" value="ECO:0007669"/>
    <property type="project" value="RHEA"/>
</dbReference>
<dbReference type="GO" id="GO:0099040">
    <property type="term" value="P:ceramide translocation"/>
    <property type="evidence" value="ECO:0000315"/>
    <property type="project" value="SGD"/>
</dbReference>
<dbReference type="GO" id="GO:0006897">
    <property type="term" value="P:endocytosis"/>
    <property type="evidence" value="ECO:0000315"/>
    <property type="project" value="SGD"/>
</dbReference>
<dbReference type="GO" id="GO:0007163">
    <property type="term" value="P:establishment or maintenance of cell polarity"/>
    <property type="evidence" value="ECO:0000316"/>
    <property type="project" value="SGD"/>
</dbReference>
<dbReference type="GO" id="GO:0006886">
    <property type="term" value="P:intracellular protein transport"/>
    <property type="evidence" value="ECO:0000316"/>
    <property type="project" value="SGD"/>
</dbReference>
<dbReference type="GO" id="GO:0045332">
    <property type="term" value="P:phospholipid translocation"/>
    <property type="evidence" value="ECO:0000314"/>
    <property type="project" value="UniProtKB"/>
</dbReference>
<dbReference type="CDD" id="cd02073">
    <property type="entry name" value="P-type_ATPase_APLT_Dnf-like"/>
    <property type="match status" value="1"/>
</dbReference>
<dbReference type="FunFam" id="3.40.1110.10:FF:000048">
    <property type="entry name" value="Phospholipid-transporting ATPase"/>
    <property type="match status" value="1"/>
</dbReference>
<dbReference type="FunFam" id="3.40.50.1000:FF:000108">
    <property type="entry name" value="Phospholipid-transporting ATPase"/>
    <property type="match status" value="1"/>
</dbReference>
<dbReference type="FunFam" id="3.40.50.1000:FF:000001">
    <property type="entry name" value="Phospholipid-transporting ATPase IC"/>
    <property type="match status" value="1"/>
</dbReference>
<dbReference type="Gene3D" id="3.40.1110.10">
    <property type="entry name" value="Calcium-transporting ATPase, cytoplasmic domain N"/>
    <property type="match status" value="1"/>
</dbReference>
<dbReference type="Gene3D" id="2.70.150.10">
    <property type="entry name" value="Calcium-transporting ATPase, cytoplasmic transduction domain A"/>
    <property type="match status" value="1"/>
</dbReference>
<dbReference type="Gene3D" id="3.40.50.1000">
    <property type="entry name" value="HAD superfamily/HAD-like"/>
    <property type="match status" value="1"/>
</dbReference>
<dbReference type="InterPro" id="IPR023299">
    <property type="entry name" value="ATPase_P-typ_cyto_dom_N"/>
</dbReference>
<dbReference type="InterPro" id="IPR018303">
    <property type="entry name" value="ATPase_P-typ_P_site"/>
</dbReference>
<dbReference type="InterPro" id="IPR023298">
    <property type="entry name" value="ATPase_P-typ_TM_dom_sf"/>
</dbReference>
<dbReference type="InterPro" id="IPR008250">
    <property type="entry name" value="ATPase_P-typ_transduc_dom_A_sf"/>
</dbReference>
<dbReference type="InterPro" id="IPR036412">
    <property type="entry name" value="HAD-like_sf"/>
</dbReference>
<dbReference type="InterPro" id="IPR023214">
    <property type="entry name" value="HAD_sf"/>
</dbReference>
<dbReference type="InterPro" id="IPR006539">
    <property type="entry name" value="P-type_ATPase_IV"/>
</dbReference>
<dbReference type="InterPro" id="IPR032631">
    <property type="entry name" value="P-type_ATPase_N"/>
</dbReference>
<dbReference type="InterPro" id="IPR001757">
    <property type="entry name" value="P_typ_ATPase"/>
</dbReference>
<dbReference type="InterPro" id="IPR032630">
    <property type="entry name" value="P_typ_ATPase_c"/>
</dbReference>
<dbReference type="InterPro" id="IPR044492">
    <property type="entry name" value="P_typ_ATPase_HD_dom"/>
</dbReference>
<dbReference type="NCBIfam" id="TIGR01652">
    <property type="entry name" value="ATPase-Plipid"/>
    <property type="match status" value="1"/>
</dbReference>
<dbReference type="NCBIfam" id="TIGR01494">
    <property type="entry name" value="ATPase_P-type"/>
    <property type="match status" value="2"/>
</dbReference>
<dbReference type="PANTHER" id="PTHR24092:SF180">
    <property type="entry name" value="PHOSPHOLIPID-TRANSPORTING ATPASE DNF1-RELATED"/>
    <property type="match status" value="1"/>
</dbReference>
<dbReference type="PANTHER" id="PTHR24092">
    <property type="entry name" value="PROBABLE PHOSPHOLIPID-TRANSPORTING ATPASE"/>
    <property type="match status" value="1"/>
</dbReference>
<dbReference type="Pfam" id="PF13246">
    <property type="entry name" value="Cation_ATPase"/>
    <property type="match status" value="1"/>
</dbReference>
<dbReference type="Pfam" id="PF16212">
    <property type="entry name" value="PhoLip_ATPase_C"/>
    <property type="match status" value="1"/>
</dbReference>
<dbReference type="Pfam" id="PF16209">
    <property type="entry name" value="PhoLip_ATPase_N"/>
    <property type="match status" value="1"/>
</dbReference>
<dbReference type="PRINTS" id="PR00119">
    <property type="entry name" value="CATATPASE"/>
</dbReference>
<dbReference type="SFLD" id="SFLDS00003">
    <property type="entry name" value="Haloacid_Dehalogenase"/>
    <property type="match status" value="1"/>
</dbReference>
<dbReference type="SFLD" id="SFLDF00027">
    <property type="entry name" value="p-type_atpase"/>
    <property type="match status" value="1"/>
</dbReference>
<dbReference type="SUPFAM" id="SSF81653">
    <property type="entry name" value="Calcium ATPase, transduction domain A"/>
    <property type="match status" value="1"/>
</dbReference>
<dbReference type="SUPFAM" id="SSF81665">
    <property type="entry name" value="Calcium ATPase, transmembrane domain M"/>
    <property type="match status" value="1"/>
</dbReference>
<dbReference type="SUPFAM" id="SSF56784">
    <property type="entry name" value="HAD-like"/>
    <property type="match status" value="1"/>
</dbReference>
<dbReference type="SUPFAM" id="SSF81660">
    <property type="entry name" value="Metal cation-transporting ATPase, ATP-binding domain N"/>
    <property type="match status" value="1"/>
</dbReference>
<dbReference type="PROSITE" id="PS00154">
    <property type="entry name" value="ATPASE_E1_E2"/>
    <property type="match status" value="1"/>
</dbReference>